<evidence type="ECO:0000255" key="1">
    <source>
        <dbReference type="HAMAP-Rule" id="MF_01396"/>
    </source>
</evidence>
<reference key="1">
    <citation type="journal article" date="2009" name="J. Bacteriol.">
        <title>Role of conjugative elements in the evolution of the multidrug-resistant pandemic clone Streptococcus pneumoniae Spain23F ST81.</title>
        <authorList>
            <person name="Croucher N.J."/>
            <person name="Walker D."/>
            <person name="Romero P."/>
            <person name="Lennard N."/>
            <person name="Paterson G.K."/>
            <person name="Bason N.C."/>
            <person name="Mitchell A.M."/>
            <person name="Quail M.A."/>
            <person name="Andrew P.W."/>
            <person name="Parkhill J."/>
            <person name="Bentley S.D."/>
            <person name="Mitchell T.J."/>
        </authorList>
    </citation>
    <scope>NUCLEOTIDE SEQUENCE [LARGE SCALE GENOMIC DNA]</scope>
    <source>
        <strain>ATCC 700669 / Spain 23F-1</strain>
    </source>
</reference>
<sequence>MNLTFLGLCIACMGVSVGEGLLMNGLFKSVARQPDMLSEFRSLMFLGVAFIEGTFFVTLVFSFIIK</sequence>
<feature type="chain" id="PRO_1000184514" description="ATP synthase subunit c">
    <location>
        <begin position="1"/>
        <end position="66"/>
    </location>
</feature>
<feature type="transmembrane region" description="Helical" evidence="1">
    <location>
        <begin position="3"/>
        <end position="23"/>
    </location>
</feature>
<feature type="transmembrane region" description="Helical" evidence="1">
    <location>
        <begin position="45"/>
        <end position="65"/>
    </location>
</feature>
<feature type="site" description="Reversibly protonated during proton transport" evidence="1">
    <location>
        <position position="52"/>
    </location>
</feature>
<organism>
    <name type="scientific">Streptococcus pneumoniae (strain ATCC 700669 / Spain 23F-1)</name>
    <dbReference type="NCBI Taxonomy" id="561276"/>
    <lineage>
        <taxon>Bacteria</taxon>
        <taxon>Bacillati</taxon>
        <taxon>Bacillota</taxon>
        <taxon>Bacilli</taxon>
        <taxon>Lactobacillales</taxon>
        <taxon>Streptococcaceae</taxon>
        <taxon>Streptococcus</taxon>
    </lineage>
</organism>
<dbReference type="EMBL" id="FM211187">
    <property type="protein sequence ID" value="CAR69260.1"/>
    <property type="molecule type" value="Genomic_DNA"/>
</dbReference>
<dbReference type="RefSeq" id="WP_001054562.1">
    <property type="nucleotide sequence ID" value="NC_011900.1"/>
</dbReference>
<dbReference type="SMR" id="B8ZLB5"/>
<dbReference type="KEGG" id="sne:SPN23F14780"/>
<dbReference type="HOGENOM" id="CLU_148047_5_2_9"/>
<dbReference type="GO" id="GO:0005886">
    <property type="term" value="C:plasma membrane"/>
    <property type="evidence" value="ECO:0007669"/>
    <property type="project" value="UniProtKB-SubCell"/>
</dbReference>
<dbReference type="GO" id="GO:0045259">
    <property type="term" value="C:proton-transporting ATP synthase complex"/>
    <property type="evidence" value="ECO:0007669"/>
    <property type="project" value="UniProtKB-KW"/>
</dbReference>
<dbReference type="GO" id="GO:0033177">
    <property type="term" value="C:proton-transporting two-sector ATPase complex, proton-transporting domain"/>
    <property type="evidence" value="ECO:0007669"/>
    <property type="project" value="InterPro"/>
</dbReference>
<dbReference type="GO" id="GO:0008289">
    <property type="term" value="F:lipid binding"/>
    <property type="evidence" value="ECO:0007669"/>
    <property type="project" value="UniProtKB-KW"/>
</dbReference>
<dbReference type="GO" id="GO:0046933">
    <property type="term" value="F:proton-transporting ATP synthase activity, rotational mechanism"/>
    <property type="evidence" value="ECO:0007669"/>
    <property type="project" value="UniProtKB-UniRule"/>
</dbReference>
<dbReference type="CDD" id="cd18121">
    <property type="entry name" value="ATP-synt_Fo_c"/>
    <property type="match status" value="1"/>
</dbReference>
<dbReference type="FunFam" id="1.20.20.10:FF:000017">
    <property type="entry name" value="ATP synthase subunit c"/>
    <property type="match status" value="1"/>
</dbReference>
<dbReference type="Gene3D" id="1.20.20.10">
    <property type="entry name" value="F1F0 ATP synthase subunit C"/>
    <property type="match status" value="1"/>
</dbReference>
<dbReference type="HAMAP" id="MF_01396">
    <property type="entry name" value="ATP_synth_c_bact"/>
    <property type="match status" value="1"/>
</dbReference>
<dbReference type="InterPro" id="IPR000454">
    <property type="entry name" value="ATP_synth_F0_csu"/>
</dbReference>
<dbReference type="InterPro" id="IPR020537">
    <property type="entry name" value="ATP_synth_F0_csu_DDCD_BS"/>
</dbReference>
<dbReference type="InterPro" id="IPR038662">
    <property type="entry name" value="ATP_synth_F0_csu_sf"/>
</dbReference>
<dbReference type="InterPro" id="IPR002379">
    <property type="entry name" value="ATPase_proteolipid_c-like_dom"/>
</dbReference>
<dbReference type="InterPro" id="IPR035921">
    <property type="entry name" value="F/V-ATP_Csub_sf"/>
</dbReference>
<dbReference type="NCBIfam" id="NF009997">
    <property type="entry name" value="PRK13467.1"/>
    <property type="match status" value="1"/>
</dbReference>
<dbReference type="Pfam" id="PF00137">
    <property type="entry name" value="ATP-synt_C"/>
    <property type="match status" value="1"/>
</dbReference>
<dbReference type="PRINTS" id="PR00124">
    <property type="entry name" value="ATPASEC"/>
</dbReference>
<dbReference type="SUPFAM" id="SSF81333">
    <property type="entry name" value="F1F0 ATP synthase subunit C"/>
    <property type="match status" value="1"/>
</dbReference>
<dbReference type="PROSITE" id="PS00605">
    <property type="entry name" value="ATPASE_C"/>
    <property type="match status" value="1"/>
</dbReference>
<protein>
    <recommendedName>
        <fullName evidence="1">ATP synthase subunit c</fullName>
    </recommendedName>
    <alternativeName>
        <fullName evidence="1">ATP synthase F(0) sector subunit c</fullName>
    </alternativeName>
    <alternativeName>
        <fullName evidence="1">F-type ATPase subunit c</fullName>
        <shortName evidence="1">F-ATPase subunit c</shortName>
    </alternativeName>
    <alternativeName>
        <fullName evidence="1">Lipid-binding protein</fullName>
    </alternativeName>
</protein>
<proteinExistence type="inferred from homology"/>
<keyword id="KW-0066">ATP synthesis</keyword>
<keyword id="KW-1003">Cell membrane</keyword>
<keyword id="KW-0138">CF(0)</keyword>
<keyword id="KW-0375">Hydrogen ion transport</keyword>
<keyword id="KW-0406">Ion transport</keyword>
<keyword id="KW-0446">Lipid-binding</keyword>
<keyword id="KW-0472">Membrane</keyword>
<keyword id="KW-0812">Transmembrane</keyword>
<keyword id="KW-1133">Transmembrane helix</keyword>
<keyword id="KW-0813">Transport</keyword>
<gene>
    <name evidence="1" type="primary">atpE</name>
    <name type="ordered locus">SPN23F14780</name>
</gene>
<name>ATPL_STRPJ</name>
<comment type="function">
    <text evidence="1">F(1)F(0) ATP synthase produces ATP from ADP in the presence of a proton or sodium gradient. F-type ATPases consist of two structural domains, F(1) containing the extramembraneous catalytic core and F(0) containing the membrane proton channel, linked together by a central stalk and a peripheral stalk. During catalysis, ATP synthesis in the catalytic domain of F(1) is coupled via a rotary mechanism of the central stalk subunits to proton translocation.</text>
</comment>
<comment type="function">
    <text evidence="1">Key component of the F(0) channel; it plays a direct role in translocation across the membrane. A homomeric c-ring of between 10-14 subunits forms the central stalk rotor element with the F(1) delta and epsilon subunits.</text>
</comment>
<comment type="subunit">
    <text evidence="1">F-type ATPases have 2 components, F(1) - the catalytic core - and F(0) - the membrane proton channel. F(1) has five subunits: alpha(3), beta(3), gamma(1), delta(1), epsilon(1). F(0) has three main subunits: a(1), b(2) and c(10-14). The alpha and beta chains form an alternating ring which encloses part of the gamma chain. F(1) is attached to F(0) by a central stalk formed by the gamma and epsilon chains, while a peripheral stalk is formed by the delta and b chains.</text>
</comment>
<comment type="subcellular location">
    <subcellularLocation>
        <location evidence="1">Cell membrane</location>
        <topology evidence="1">Multi-pass membrane protein</topology>
    </subcellularLocation>
</comment>
<comment type="similarity">
    <text evidence="1">Belongs to the ATPase C chain family.</text>
</comment>
<accession>B8ZLB5</accession>